<evidence type="ECO:0000255" key="1">
    <source>
        <dbReference type="HAMAP-Rule" id="MF_00060"/>
    </source>
</evidence>
<reference key="1">
    <citation type="journal article" date="2008" name="Genome Res.">
        <title>Comparative genome analysis of Salmonella enteritidis PT4 and Salmonella gallinarum 287/91 provides insights into evolutionary and host adaptation pathways.</title>
        <authorList>
            <person name="Thomson N.R."/>
            <person name="Clayton D.J."/>
            <person name="Windhorst D."/>
            <person name="Vernikos G."/>
            <person name="Davidson S."/>
            <person name="Churcher C."/>
            <person name="Quail M.A."/>
            <person name="Stevens M."/>
            <person name="Jones M.A."/>
            <person name="Watson M."/>
            <person name="Barron A."/>
            <person name="Layton A."/>
            <person name="Pickard D."/>
            <person name="Kingsley R.A."/>
            <person name="Bignell A."/>
            <person name="Clark L."/>
            <person name="Harris B."/>
            <person name="Ormond D."/>
            <person name="Abdellah Z."/>
            <person name="Brooks K."/>
            <person name="Cherevach I."/>
            <person name="Chillingworth T."/>
            <person name="Woodward J."/>
            <person name="Norberczak H."/>
            <person name="Lord A."/>
            <person name="Arrowsmith C."/>
            <person name="Jagels K."/>
            <person name="Moule S."/>
            <person name="Mungall K."/>
            <person name="Saunders M."/>
            <person name="Whitehead S."/>
            <person name="Chabalgoity J.A."/>
            <person name="Maskell D."/>
            <person name="Humphreys T."/>
            <person name="Roberts M."/>
            <person name="Barrow P.A."/>
            <person name="Dougan G."/>
            <person name="Parkhill J."/>
        </authorList>
    </citation>
    <scope>NUCLEOTIDE SEQUENCE [LARGE SCALE GENOMIC DNA]</scope>
    <source>
        <strain>P125109</strain>
    </source>
</reference>
<name>SURE_SALEP</name>
<keyword id="KW-0963">Cytoplasm</keyword>
<keyword id="KW-0378">Hydrolase</keyword>
<keyword id="KW-0479">Metal-binding</keyword>
<keyword id="KW-0547">Nucleotide-binding</keyword>
<sequence length="253" mass="26980">MRILLSNDDGVHAPGIQTLAKALREFADVQVVAPDRNRSGASNSLTLESSLRTFTFDNGDIAVQMGTPTDCVYLGVNALMRPRPDIVVSGINAGPNLGDDVIYSGTVAAAMEGRHLGFPALAVSLNGYQHYDTAAAVTCALLRGLSREPLRTGRILNVNVPDLPLAQVKGIRVTRCGSRHPADKVIPQEDPRGNTLYWIGPPGDKYDAGPDTDFAAVDEGYVSVTPLHVDLTAHSAHDVVSDWLDSVGVGTQW</sequence>
<proteinExistence type="inferred from homology"/>
<organism>
    <name type="scientific">Salmonella enteritidis PT4 (strain P125109)</name>
    <dbReference type="NCBI Taxonomy" id="550537"/>
    <lineage>
        <taxon>Bacteria</taxon>
        <taxon>Pseudomonadati</taxon>
        <taxon>Pseudomonadota</taxon>
        <taxon>Gammaproteobacteria</taxon>
        <taxon>Enterobacterales</taxon>
        <taxon>Enterobacteriaceae</taxon>
        <taxon>Salmonella</taxon>
    </lineage>
</organism>
<protein>
    <recommendedName>
        <fullName evidence="1">5'/3'-nucleotidase SurE</fullName>
        <ecNumber evidence="1">3.1.3.5</ecNumber>
        <ecNumber evidence="1">3.1.3.6</ecNumber>
    </recommendedName>
    <alternativeName>
        <fullName evidence="1">Exopolyphosphatase</fullName>
        <ecNumber evidence="1">3.6.1.11</ecNumber>
    </alternativeName>
    <alternativeName>
        <fullName evidence="1">Nucleoside monophosphate phosphohydrolase</fullName>
    </alternativeName>
</protein>
<feature type="chain" id="PRO_1000092032" description="5'/3'-nucleotidase SurE">
    <location>
        <begin position="1"/>
        <end position="253"/>
    </location>
</feature>
<feature type="binding site" evidence="1">
    <location>
        <position position="8"/>
    </location>
    <ligand>
        <name>a divalent metal cation</name>
        <dbReference type="ChEBI" id="CHEBI:60240"/>
    </ligand>
</feature>
<feature type="binding site" evidence="1">
    <location>
        <position position="9"/>
    </location>
    <ligand>
        <name>a divalent metal cation</name>
        <dbReference type="ChEBI" id="CHEBI:60240"/>
    </ligand>
</feature>
<feature type="binding site" evidence="1">
    <location>
        <position position="39"/>
    </location>
    <ligand>
        <name>a divalent metal cation</name>
        <dbReference type="ChEBI" id="CHEBI:60240"/>
    </ligand>
</feature>
<feature type="binding site" evidence="1">
    <location>
        <position position="92"/>
    </location>
    <ligand>
        <name>a divalent metal cation</name>
        <dbReference type="ChEBI" id="CHEBI:60240"/>
    </ligand>
</feature>
<accession>B5QW15</accession>
<dbReference type="EC" id="3.1.3.5" evidence="1"/>
<dbReference type="EC" id="3.1.3.6" evidence="1"/>
<dbReference type="EC" id="3.6.1.11" evidence="1"/>
<dbReference type="EMBL" id="AM933172">
    <property type="protein sequence ID" value="CAR34345.1"/>
    <property type="molecule type" value="Genomic_DNA"/>
</dbReference>
<dbReference type="RefSeq" id="WP_001221538.1">
    <property type="nucleotide sequence ID" value="NC_011294.1"/>
</dbReference>
<dbReference type="SMR" id="B5QW15"/>
<dbReference type="KEGG" id="set:SEN2766"/>
<dbReference type="HOGENOM" id="CLU_045192_1_2_6"/>
<dbReference type="Proteomes" id="UP000000613">
    <property type="component" value="Chromosome"/>
</dbReference>
<dbReference type="GO" id="GO:0005737">
    <property type="term" value="C:cytoplasm"/>
    <property type="evidence" value="ECO:0007669"/>
    <property type="project" value="UniProtKB-SubCell"/>
</dbReference>
<dbReference type="GO" id="GO:0008254">
    <property type="term" value="F:3'-nucleotidase activity"/>
    <property type="evidence" value="ECO:0007669"/>
    <property type="project" value="UniProtKB-UniRule"/>
</dbReference>
<dbReference type="GO" id="GO:0008253">
    <property type="term" value="F:5'-nucleotidase activity"/>
    <property type="evidence" value="ECO:0007669"/>
    <property type="project" value="UniProtKB-UniRule"/>
</dbReference>
<dbReference type="GO" id="GO:0004309">
    <property type="term" value="F:exopolyphosphatase activity"/>
    <property type="evidence" value="ECO:0007669"/>
    <property type="project" value="UniProtKB-UniRule"/>
</dbReference>
<dbReference type="GO" id="GO:0046872">
    <property type="term" value="F:metal ion binding"/>
    <property type="evidence" value="ECO:0007669"/>
    <property type="project" value="UniProtKB-UniRule"/>
</dbReference>
<dbReference type="GO" id="GO:0000166">
    <property type="term" value="F:nucleotide binding"/>
    <property type="evidence" value="ECO:0007669"/>
    <property type="project" value="UniProtKB-KW"/>
</dbReference>
<dbReference type="FunFam" id="3.40.1210.10:FF:000001">
    <property type="entry name" value="5'/3'-nucleotidase SurE"/>
    <property type="match status" value="1"/>
</dbReference>
<dbReference type="Gene3D" id="3.40.1210.10">
    <property type="entry name" value="Survival protein SurE-like phosphatase/nucleotidase"/>
    <property type="match status" value="1"/>
</dbReference>
<dbReference type="HAMAP" id="MF_00060">
    <property type="entry name" value="SurE"/>
    <property type="match status" value="1"/>
</dbReference>
<dbReference type="InterPro" id="IPR030048">
    <property type="entry name" value="SurE"/>
</dbReference>
<dbReference type="InterPro" id="IPR002828">
    <property type="entry name" value="SurE-like_Pase/nucleotidase"/>
</dbReference>
<dbReference type="InterPro" id="IPR036523">
    <property type="entry name" value="SurE-like_sf"/>
</dbReference>
<dbReference type="NCBIfam" id="NF001488">
    <property type="entry name" value="PRK00346.1-1"/>
    <property type="match status" value="1"/>
</dbReference>
<dbReference type="NCBIfam" id="NF001489">
    <property type="entry name" value="PRK00346.1-3"/>
    <property type="match status" value="1"/>
</dbReference>
<dbReference type="NCBIfam" id="NF001490">
    <property type="entry name" value="PRK00346.1-4"/>
    <property type="match status" value="1"/>
</dbReference>
<dbReference type="NCBIfam" id="TIGR00087">
    <property type="entry name" value="surE"/>
    <property type="match status" value="1"/>
</dbReference>
<dbReference type="PANTHER" id="PTHR30457">
    <property type="entry name" value="5'-NUCLEOTIDASE SURE"/>
    <property type="match status" value="1"/>
</dbReference>
<dbReference type="PANTHER" id="PTHR30457:SF12">
    <property type="entry name" value="5'_3'-NUCLEOTIDASE SURE"/>
    <property type="match status" value="1"/>
</dbReference>
<dbReference type="Pfam" id="PF01975">
    <property type="entry name" value="SurE"/>
    <property type="match status" value="1"/>
</dbReference>
<dbReference type="SUPFAM" id="SSF64167">
    <property type="entry name" value="SurE-like"/>
    <property type="match status" value="1"/>
</dbReference>
<gene>
    <name evidence="1" type="primary">surE</name>
    <name type="ordered locus">SEN2766</name>
</gene>
<comment type="function">
    <text evidence="1">Nucleotidase with a broad substrate specificity as it can dephosphorylate various ribo- and deoxyribonucleoside 5'-monophosphates and ribonucleoside 3'-monophosphates with highest affinity to 3'-AMP. Also hydrolyzes polyphosphate (exopolyphosphatase activity) with the preference for short-chain-length substrates (P20-25). Might be involved in the regulation of dNTP and NTP pools, and in the turnover of 3'-mononucleotides produced by numerous intracellular RNases (T1, T2, and F) during the degradation of various RNAs.</text>
</comment>
<comment type="catalytic activity">
    <reaction evidence="1">
        <text>a ribonucleoside 5'-phosphate + H2O = a ribonucleoside + phosphate</text>
        <dbReference type="Rhea" id="RHEA:12484"/>
        <dbReference type="ChEBI" id="CHEBI:15377"/>
        <dbReference type="ChEBI" id="CHEBI:18254"/>
        <dbReference type="ChEBI" id="CHEBI:43474"/>
        <dbReference type="ChEBI" id="CHEBI:58043"/>
        <dbReference type="EC" id="3.1.3.5"/>
    </reaction>
</comment>
<comment type="catalytic activity">
    <reaction evidence="1">
        <text>a ribonucleoside 3'-phosphate + H2O = a ribonucleoside + phosphate</text>
        <dbReference type="Rhea" id="RHEA:10144"/>
        <dbReference type="ChEBI" id="CHEBI:13197"/>
        <dbReference type="ChEBI" id="CHEBI:15377"/>
        <dbReference type="ChEBI" id="CHEBI:18254"/>
        <dbReference type="ChEBI" id="CHEBI:43474"/>
        <dbReference type="EC" id="3.1.3.6"/>
    </reaction>
</comment>
<comment type="catalytic activity">
    <reaction evidence="1">
        <text>[phosphate](n) + H2O = [phosphate](n-1) + phosphate + H(+)</text>
        <dbReference type="Rhea" id="RHEA:21528"/>
        <dbReference type="Rhea" id="RHEA-COMP:9859"/>
        <dbReference type="Rhea" id="RHEA-COMP:14279"/>
        <dbReference type="ChEBI" id="CHEBI:15377"/>
        <dbReference type="ChEBI" id="CHEBI:15378"/>
        <dbReference type="ChEBI" id="CHEBI:16838"/>
        <dbReference type="ChEBI" id="CHEBI:43474"/>
        <dbReference type="EC" id="3.6.1.11"/>
    </reaction>
</comment>
<comment type="cofactor">
    <cofactor evidence="1">
        <name>a divalent metal cation</name>
        <dbReference type="ChEBI" id="CHEBI:60240"/>
    </cofactor>
    <text evidence="1">Binds 1 divalent metal cation per subunit.</text>
</comment>
<comment type="subcellular location">
    <subcellularLocation>
        <location evidence="1">Cytoplasm</location>
    </subcellularLocation>
</comment>
<comment type="similarity">
    <text evidence="1">Belongs to the SurE nucleotidase family.</text>
</comment>